<reference key="1">
    <citation type="journal article" date="2002" name="Proc. Natl. Acad. Sci. U.S.A.">
        <title>The complete genome of hyperthermophile Methanopyrus kandleri AV19 and monophyly of archaeal methanogens.</title>
        <authorList>
            <person name="Slesarev A.I."/>
            <person name="Mezhevaya K.V."/>
            <person name="Makarova K.S."/>
            <person name="Polushin N.N."/>
            <person name="Shcherbinina O.V."/>
            <person name="Shakhova V.V."/>
            <person name="Belova G.I."/>
            <person name="Aravind L."/>
            <person name="Natale D.A."/>
            <person name="Rogozin I.B."/>
            <person name="Tatusov R.L."/>
            <person name="Wolf Y.I."/>
            <person name="Stetter K.O."/>
            <person name="Malykh A.G."/>
            <person name="Koonin E.V."/>
            <person name="Kozyavkin S.A."/>
        </authorList>
    </citation>
    <scope>NUCLEOTIDE SEQUENCE [LARGE SCALE GENOMIC DNA]</scope>
    <source>
        <strain>AV19 / DSM 6324 / JCM 9639 / NBRC 100938</strain>
    </source>
</reference>
<sequence>MTAGGRRMSMVDVTGKKEEIRIAEASGFLRLTEDGVNAVKSGESHPQGKGDPIEVAKVAAILAVKKTPELVPHCHPIKITGVDVDVEVLEDGVKMSVRVKSEGKTGVEMDALTGLVVGLVTLWDMVKYAEKDEEGQYPHTRIENVRVVEKIIKEKE</sequence>
<dbReference type="EC" id="4.6.1.17" evidence="1"/>
<dbReference type="EMBL" id="AE009439">
    <property type="protein sequence ID" value="AAM01769.1"/>
    <property type="molecule type" value="Genomic_DNA"/>
</dbReference>
<dbReference type="SMR" id="Q8TXV5"/>
<dbReference type="FunCoup" id="Q8TXV5">
    <property type="interactions" value="90"/>
</dbReference>
<dbReference type="STRING" id="190192.MK0554"/>
<dbReference type="PaxDb" id="190192-MK0554"/>
<dbReference type="EnsemblBacteria" id="AAM01769">
    <property type="protein sequence ID" value="AAM01769"/>
    <property type="gene ID" value="MK0554"/>
</dbReference>
<dbReference type="KEGG" id="mka:MK0554"/>
<dbReference type="PATRIC" id="fig|190192.8.peg.589"/>
<dbReference type="HOGENOM" id="CLU_074693_1_2_2"/>
<dbReference type="InParanoid" id="Q8TXV5"/>
<dbReference type="OrthoDB" id="10067at2157"/>
<dbReference type="UniPathway" id="UPA00344"/>
<dbReference type="Proteomes" id="UP000001826">
    <property type="component" value="Chromosome"/>
</dbReference>
<dbReference type="GO" id="GO:0061799">
    <property type="term" value="F:cyclic pyranopterin monophosphate synthase activity"/>
    <property type="evidence" value="ECO:0007669"/>
    <property type="project" value="UniProtKB-UniRule"/>
</dbReference>
<dbReference type="GO" id="GO:0006777">
    <property type="term" value="P:Mo-molybdopterin cofactor biosynthetic process"/>
    <property type="evidence" value="ECO:0007669"/>
    <property type="project" value="UniProtKB-UniRule"/>
</dbReference>
<dbReference type="CDD" id="cd01419">
    <property type="entry name" value="MoaC_A"/>
    <property type="match status" value="1"/>
</dbReference>
<dbReference type="Gene3D" id="3.30.70.640">
    <property type="entry name" value="Molybdopterin cofactor biosynthesis C (MoaC) domain"/>
    <property type="match status" value="1"/>
</dbReference>
<dbReference type="HAMAP" id="MF_01224_A">
    <property type="entry name" value="MoaC_A"/>
    <property type="match status" value="1"/>
</dbReference>
<dbReference type="InterPro" id="IPR023047">
    <property type="entry name" value="Mo_CF_biosynth-C_arc"/>
</dbReference>
<dbReference type="InterPro" id="IPR036522">
    <property type="entry name" value="MoaC_sf"/>
</dbReference>
<dbReference type="InterPro" id="IPR002820">
    <property type="entry name" value="Mopterin_CF_biosynth-C_dom"/>
</dbReference>
<dbReference type="NCBIfam" id="NF008999">
    <property type="entry name" value="PRK12343.1"/>
    <property type="match status" value="1"/>
</dbReference>
<dbReference type="Pfam" id="PF01967">
    <property type="entry name" value="MoaC"/>
    <property type="match status" value="1"/>
</dbReference>
<dbReference type="SUPFAM" id="SSF55040">
    <property type="entry name" value="Molybdenum cofactor biosynthesis protein C, MoaC"/>
    <property type="match status" value="1"/>
</dbReference>
<proteinExistence type="inferred from homology"/>
<gene>
    <name evidence="1" type="primary">moaC</name>
    <name type="ordered locus">MK0554</name>
</gene>
<accession>Q8TXV5</accession>
<organism>
    <name type="scientific">Methanopyrus kandleri (strain AV19 / DSM 6324 / JCM 9639 / NBRC 100938)</name>
    <dbReference type="NCBI Taxonomy" id="190192"/>
    <lineage>
        <taxon>Archaea</taxon>
        <taxon>Methanobacteriati</taxon>
        <taxon>Methanobacteriota</taxon>
        <taxon>Methanomada group</taxon>
        <taxon>Methanopyri</taxon>
        <taxon>Methanopyrales</taxon>
        <taxon>Methanopyraceae</taxon>
        <taxon>Methanopyrus</taxon>
    </lineage>
</organism>
<comment type="function">
    <text evidence="1">Catalyzes the conversion of (8S)-3',8-cyclo-7,8-dihydroguanosine 5'-triphosphate to cyclic pyranopterin monophosphate (cPMP).</text>
</comment>
<comment type="catalytic activity">
    <reaction evidence="1">
        <text>(8S)-3',8-cyclo-7,8-dihydroguanosine 5'-triphosphate = cyclic pyranopterin phosphate + diphosphate</text>
        <dbReference type="Rhea" id="RHEA:49580"/>
        <dbReference type="ChEBI" id="CHEBI:33019"/>
        <dbReference type="ChEBI" id="CHEBI:59648"/>
        <dbReference type="ChEBI" id="CHEBI:131766"/>
        <dbReference type="EC" id="4.6.1.17"/>
    </reaction>
</comment>
<comment type="pathway">
    <text evidence="1">Cofactor biosynthesis; molybdopterin biosynthesis.</text>
</comment>
<comment type="subunit">
    <text evidence="1">Homohexamer; trimer of dimers.</text>
</comment>
<comment type="similarity">
    <text evidence="1">Belongs to the MoaC family.</text>
</comment>
<name>MOAC_METKA</name>
<protein>
    <recommendedName>
        <fullName evidence="1">Probable cyclic pyranopterin monophosphate synthase</fullName>
        <ecNumber evidence="1">4.6.1.17</ecNumber>
    </recommendedName>
    <alternativeName>
        <fullName evidence="1">Molybdenum cofactor biosynthesis protein C</fullName>
    </alternativeName>
</protein>
<evidence type="ECO:0000255" key="1">
    <source>
        <dbReference type="HAMAP-Rule" id="MF_01224"/>
    </source>
</evidence>
<keyword id="KW-0456">Lyase</keyword>
<keyword id="KW-0501">Molybdenum cofactor biosynthesis</keyword>
<keyword id="KW-1185">Reference proteome</keyword>
<feature type="chain" id="PRO_0000097855" description="Probable cyclic pyranopterin monophosphate synthase">
    <location>
        <begin position="1"/>
        <end position="156"/>
    </location>
</feature>
<feature type="active site" evidence="1">
    <location>
        <position position="124"/>
    </location>
</feature>
<feature type="binding site" evidence="1">
    <location>
        <begin position="109"/>
        <end position="110"/>
    </location>
    <ligand>
        <name>substrate</name>
    </ligand>
</feature>